<gene>
    <name evidence="1" type="primary">tig</name>
    <name type="ordered locus">Acid_2025</name>
</gene>
<organism>
    <name type="scientific">Solibacter usitatus (strain Ellin6076)</name>
    <dbReference type="NCBI Taxonomy" id="234267"/>
    <lineage>
        <taxon>Bacteria</taxon>
        <taxon>Pseudomonadati</taxon>
        <taxon>Acidobacteriota</taxon>
        <taxon>Terriglobia</taxon>
        <taxon>Bryobacterales</taxon>
        <taxon>Solibacteraceae</taxon>
        <taxon>Candidatus Solibacter</taxon>
    </lineage>
</organism>
<protein>
    <recommendedName>
        <fullName evidence="1">Trigger factor</fullName>
        <shortName evidence="1">TF</shortName>
        <ecNumber evidence="1">5.2.1.8</ecNumber>
    </recommendedName>
    <alternativeName>
        <fullName evidence="1">PPIase</fullName>
    </alternativeName>
</protein>
<feature type="chain" id="PRO_0000322451" description="Trigger factor">
    <location>
        <begin position="1"/>
        <end position="422"/>
    </location>
</feature>
<feature type="domain" description="PPIase FKBP-type" evidence="1">
    <location>
        <begin position="158"/>
        <end position="242"/>
    </location>
</feature>
<comment type="function">
    <text evidence="1">Involved in protein export. Acts as a chaperone by maintaining the newly synthesized protein in an open conformation. Functions as a peptidyl-prolyl cis-trans isomerase.</text>
</comment>
<comment type="catalytic activity">
    <reaction evidence="1">
        <text>[protein]-peptidylproline (omega=180) = [protein]-peptidylproline (omega=0)</text>
        <dbReference type="Rhea" id="RHEA:16237"/>
        <dbReference type="Rhea" id="RHEA-COMP:10747"/>
        <dbReference type="Rhea" id="RHEA-COMP:10748"/>
        <dbReference type="ChEBI" id="CHEBI:83833"/>
        <dbReference type="ChEBI" id="CHEBI:83834"/>
        <dbReference type="EC" id="5.2.1.8"/>
    </reaction>
</comment>
<comment type="subcellular location">
    <subcellularLocation>
        <location>Cytoplasm</location>
    </subcellularLocation>
    <text evidence="1">About half TF is bound to the ribosome near the polypeptide exit tunnel while the other half is free in the cytoplasm.</text>
</comment>
<comment type="domain">
    <text evidence="1">Consists of 3 domains; the N-terminus binds the ribosome, the middle domain has PPIase activity, while the C-terminus has intrinsic chaperone activity on its own.</text>
</comment>
<comment type="similarity">
    <text evidence="1">Belongs to the FKBP-type PPIase family. Tig subfamily.</text>
</comment>
<evidence type="ECO:0000255" key="1">
    <source>
        <dbReference type="HAMAP-Rule" id="MF_00303"/>
    </source>
</evidence>
<accession>Q026Q4</accession>
<sequence length="422" mass="47770">MALVEGCKHSLEISIPAAEVETETNRVVLDVQKRAKLPGFRPGKSPASIIRKQFAGDIRQQVLESLIPTHLQKQLEAENLNVVGTPDISDVHFHDNEPLRFKATFEVVPEIELGEYTNIEVPYQDPEVTDEDVTSRIDEIREQKAQYVNIDPRPLADGDFAVVSLESLEGVSGDPVKTDEMQLEIGAKETFEAFNENLRGLSPGDEKDFEVEYPADYGSEKLAGRKVKFHAVVKGLRKKELPELDDEFAQELGDYRTVDELKEAVRKAIFSQRQYEAQQEAKNKIVDKLVDAHEFPVPEVFVERQIRNRVEQSLRAMAEQGVDPSKLKLDWEKVKEAQREKATREVKASLLLGKVSDREAIRATRDEVDAEVEKAARQQRKPVAAVHMEFEKDGTLGRIASHIQTDKTLSFLFERARKTAES</sequence>
<reference key="1">
    <citation type="journal article" date="2009" name="Appl. Environ. Microbiol.">
        <title>Three genomes from the phylum Acidobacteria provide insight into the lifestyles of these microorganisms in soils.</title>
        <authorList>
            <person name="Ward N.L."/>
            <person name="Challacombe J.F."/>
            <person name="Janssen P.H."/>
            <person name="Henrissat B."/>
            <person name="Coutinho P.M."/>
            <person name="Wu M."/>
            <person name="Xie G."/>
            <person name="Haft D.H."/>
            <person name="Sait M."/>
            <person name="Badger J."/>
            <person name="Barabote R.D."/>
            <person name="Bradley B."/>
            <person name="Brettin T.S."/>
            <person name="Brinkac L.M."/>
            <person name="Bruce D."/>
            <person name="Creasy T."/>
            <person name="Daugherty S.C."/>
            <person name="Davidsen T.M."/>
            <person name="DeBoy R.T."/>
            <person name="Detter J.C."/>
            <person name="Dodson R.J."/>
            <person name="Durkin A.S."/>
            <person name="Ganapathy A."/>
            <person name="Gwinn-Giglio M."/>
            <person name="Han C.S."/>
            <person name="Khouri H."/>
            <person name="Kiss H."/>
            <person name="Kothari S.P."/>
            <person name="Madupu R."/>
            <person name="Nelson K.E."/>
            <person name="Nelson W.C."/>
            <person name="Paulsen I."/>
            <person name="Penn K."/>
            <person name="Ren Q."/>
            <person name="Rosovitz M.J."/>
            <person name="Selengut J.D."/>
            <person name="Shrivastava S."/>
            <person name="Sullivan S.A."/>
            <person name="Tapia R."/>
            <person name="Thompson L.S."/>
            <person name="Watkins K.L."/>
            <person name="Yang Q."/>
            <person name="Yu C."/>
            <person name="Zafar N."/>
            <person name="Zhou L."/>
            <person name="Kuske C.R."/>
        </authorList>
    </citation>
    <scope>NUCLEOTIDE SEQUENCE [LARGE SCALE GENOMIC DNA]</scope>
    <source>
        <strain>Ellin6076</strain>
    </source>
</reference>
<proteinExistence type="inferred from homology"/>
<name>TIG_SOLUE</name>
<keyword id="KW-0131">Cell cycle</keyword>
<keyword id="KW-0132">Cell division</keyword>
<keyword id="KW-0143">Chaperone</keyword>
<keyword id="KW-0963">Cytoplasm</keyword>
<keyword id="KW-0413">Isomerase</keyword>
<keyword id="KW-0697">Rotamase</keyword>
<dbReference type="EC" id="5.2.1.8" evidence="1"/>
<dbReference type="EMBL" id="CP000473">
    <property type="protein sequence ID" value="ABJ83015.1"/>
    <property type="molecule type" value="Genomic_DNA"/>
</dbReference>
<dbReference type="SMR" id="Q026Q4"/>
<dbReference type="FunCoup" id="Q026Q4">
    <property type="interactions" value="711"/>
</dbReference>
<dbReference type="STRING" id="234267.Acid_2025"/>
<dbReference type="KEGG" id="sus:Acid_2025"/>
<dbReference type="eggNOG" id="COG0544">
    <property type="taxonomic scope" value="Bacteria"/>
</dbReference>
<dbReference type="HOGENOM" id="CLU_033058_2_0_0"/>
<dbReference type="InParanoid" id="Q026Q4"/>
<dbReference type="OrthoDB" id="9767721at2"/>
<dbReference type="GO" id="GO:0005737">
    <property type="term" value="C:cytoplasm"/>
    <property type="evidence" value="ECO:0007669"/>
    <property type="project" value="UniProtKB-SubCell"/>
</dbReference>
<dbReference type="GO" id="GO:0003755">
    <property type="term" value="F:peptidyl-prolyl cis-trans isomerase activity"/>
    <property type="evidence" value="ECO:0007669"/>
    <property type="project" value="UniProtKB-UniRule"/>
</dbReference>
<dbReference type="GO" id="GO:0044183">
    <property type="term" value="F:protein folding chaperone"/>
    <property type="evidence" value="ECO:0007669"/>
    <property type="project" value="TreeGrafter"/>
</dbReference>
<dbReference type="GO" id="GO:0043022">
    <property type="term" value="F:ribosome binding"/>
    <property type="evidence" value="ECO:0007669"/>
    <property type="project" value="TreeGrafter"/>
</dbReference>
<dbReference type="GO" id="GO:0051083">
    <property type="term" value="P:'de novo' cotranslational protein folding"/>
    <property type="evidence" value="ECO:0007669"/>
    <property type="project" value="TreeGrafter"/>
</dbReference>
<dbReference type="GO" id="GO:0051301">
    <property type="term" value="P:cell division"/>
    <property type="evidence" value="ECO:0007669"/>
    <property type="project" value="UniProtKB-KW"/>
</dbReference>
<dbReference type="GO" id="GO:0061077">
    <property type="term" value="P:chaperone-mediated protein folding"/>
    <property type="evidence" value="ECO:0007669"/>
    <property type="project" value="TreeGrafter"/>
</dbReference>
<dbReference type="GO" id="GO:0015031">
    <property type="term" value="P:protein transport"/>
    <property type="evidence" value="ECO:0007669"/>
    <property type="project" value="UniProtKB-UniRule"/>
</dbReference>
<dbReference type="GO" id="GO:0043335">
    <property type="term" value="P:protein unfolding"/>
    <property type="evidence" value="ECO:0007669"/>
    <property type="project" value="TreeGrafter"/>
</dbReference>
<dbReference type="Gene3D" id="3.10.50.40">
    <property type="match status" value="1"/>
</dbReference>
<dbReference type="Gene3D" id="3.30.70.1050">
    <property type="entry name" value="Trigger factor ribosome-binding domain"/>
    <property type="match status" value="1"/>
</dbReference>
<dbReference type="Gene3D" id="1.10.3120.10">
    <property type="entry name" value="Trigger factor, C-terminal domain"/>
    <property type="match status" value="1"/>
</dbReference>
<dbReference type="HAMAP" id="MF_00303">
    <property type="entry name" value="Trigger_factor_Tig"/>
    <property type="match status" value="1"/>
</dbReference>
<dbReference type="InterPro" id="IPR046357">
    <property type="entry name" value="PPIase_dom_sf"/>
</dbReference>
<dbReference type="InterPro" id="IPR001179">
    <property type="entry name" value="PPIase_FKBP_dom"/>
</dbReference>
<dbReference type="InterPro" id="IPR005215">
    <property type="entry name" value="Trig_fac"/>
</dbReference>
<dbReference type="InterPro" id="IPR008880">
    <property type="entry name" value="Trigger_fac_C"/>
</dbReference>
<dbReference type="InterPro" id="IPR037041">
    <property type="entry name" value="Trigger_fac_C_sf"/>
</dbReference>
<dbReference type="InterPro" id="IPR008881">
    <property type="entry name" value="Trigger_fac_ribosome-bd_bac"/>
</dbReference>
<dbReference type="InterPro" id="IPR036611">
    <property type="entry name" value="Trigger_fac_ribosome-bd_sf"/>
</dbReference>
<dbReference type="InterPro" id="IPR027304">
    <property type="entry name" value="Trigger_fact/SurA_dom_sf"/>
</dbReference>
<dbReference type="NCBIfam" id="TIGR00115">
    <property type="entry name" value="tig"/>
    <property type="match status" value="1"/>
</dbReference>
<dbReference type="PANTHER" id="PTHR30560">
    <property type="entry name" value="TRIGGER FACTOR CHAPERONE AND PEPTIDYL-PROLYL CIS/TRANS ISOMERASE"/>
    <property type="match status" value="1"/>
</dbReference>
<dbReference type="PANTHER" id="PTHR30560:SF3">
    <property type="entry name" value="TRIGGER FACTOR-LIKE PROTEIN TIG, CHLOROPLASTIC"/>
    <property type="match status" value="1"/>
</dbReference>
<dbReference type="Pfam" id="PF00254">
    <property type="entry name" value="FKBP_C"/>
    <property type="match status" value="1"/>
</dbReference>
<dbReference type="Pfam" id="PF05698">
    <property type="entry name" value="Trigger_C"/>
    <property type="match status" value="1"/>
</dbReference>
<dbReference type="Pfam" id="PF05697">
    <property type="entry name" value="Trigger_N"/>
    <property type="match status" value="1"/>
</dbReference>
<dbReference type="PIRSF" id="PIRSF003095">
    <property type="entry name" value="Trigger_factor"/>
    <property type="match status" value="1"/>
</dbReference>
<dbReference type="SUPFAM" id="SSF54534">
    <property type="entry name" value="FKBP-like"/>
    <property type="match status" value="1"/>
</dbReference>
<dbReference type="SUPFAM" id="SSF109998">
    <property type="entry name" value="Triger factor/SurA peptide-binding domain-like"/>
    <property type="match status" value="1"/>
</dbReference>
<dbReference type="SUPFAM" id="SSF102735">
    <property type="entry name" value="Trigger factor ribosome-binding domain"/>
    <property type="match status" value="1"/>
</dbReference>